<accession>B2SVK3</accession>
<proteinExistence type="inferred from homology"/>
<gene>
    <name evidence="2" type="primary">infB</name>
    <name type="ordered locus">PXO_01303</name>
</gene>
<comment type="function">
    <text evidence="2">One of the essential components for the initiation of protein synthesis. Protects formylmethionyl-tRNA from spontaneous hydrolysis and promotes its binding to the 30S ribosomal subunits. Also involved in the hydrolysis of GTP during the formation of the 70S ribosomal complex.</text>
</comment>
<comment type="subcellular location">
    <subcellularLocation>
        <location evidence="2">Cytoplasm</location>
    </subcellularLocation>
</comment>
<comment type="similarity">
    <text evidence="2">Belongs to the TRAFAC class translation factor GTPase superfamily. Classic translation factor GTPase family. IF-2 subfamily.</text>
</comment>
<organism>
    <name type="scientific">Xanthomonas oryzae pv. oryzae (strain PXO99A)</name>
    <dbReference type="NCBI Taxonomy" id="360094"/>
    <lineage>
        <taxon>Bacteria</taxon>
        <taxon>Pseudomonadati</taxon>
        <taxon>Pseudomonadota</taxon>
        <taxon>Gammaproteobacteria</taxon>
        <taxon>Lysobacterales</taxon>
        <taxon>Lysobacteraceae</taxon>
        <taxon>Xanthomonas</taxon>
    </lineage>
</organism>
<sequence>MSQQTTIRKLAELVNTPVDKLLVQLAEAGMKFSGPDQVVTSTEKMKLLGFLRRTHGKAETPAEAASEAAKKITLNRRKLQEVTVSAGRTKTTVNVEVRQKRTYVKSENEGSGRATPMTPDEERADILAKLAASRQRNLDEQQRLAESDRVRDEEIQRKRDEEQAAKDRAEAERKAAEEAAAAASAPAPVAAAPTPSAAAPAARAPSSPSSAPRPSRPGGASPASRPSTPARPDDRNNAAKHKTRGSHVMVAGVEDDDATKRFAGQLHLSAADRARRSNVRGKPTGRPGSSSSRRGNDNGRGSNQANSGPHGFERPTAPVVREVAIGETITVADLAQKLALKGGDVVKALFKMGVMATITQSIDHDTAALVTEELGHKAVRADNADFEDALLAHAEDAQGDTTTRPPVVTIMGHVDHGKTSLLDYIRRTKIASGEAGGITQHIGAYHVETDRGVISFLDTPGHAAFTSMRARGAKITDIVVLVVAADDGVMPQTKEAVAHAKAAGVPLIVAVNKIDKAGADPLRVKNELLAENVVAEDFGGDTQFIEVSAKVGTGVDTLLDAISLQAEVLELKAVAEGRASGTVIESSLDKGRGPVATVLVQQGALKRGDYLVCGIQYGRVRALFDETGHQPGSAGPSIPVQVLGLSGVPEAGDDFVVVDDERLAKDVAQQRETKRRESRLVASATNRMEDILAQMGKGEGQQVLNLVIKADVQGSVEALKQSLVALSNEDIRINVIHSGVGGITESDANSAAASKATIIGFNVRADASARKIVESNGVDLRYFSIIYDVIDQVKQVASGLLGVEIREEIMGIAQVRDVFRSSKFGAVAGCMIIEGVVKRSKPIRVLRDSVVVFEGELESLRRFKENVDEVRNGNECGIGVKAYNDVKAGDQIECFERIEVARTL</sequence>
<keyword id="KW-0963">Cytoplasm</keyword>
<keyword id="KW-0342">GTP-binding</keyword>
<keyword id="KW-0396">Initiation factor</keyword>
<keyword id="KW-0547">Nucleotide-binding</keyword>
<keyword id="KW-0648">Protein biosynthesis</keyword>
<dbReference type="EMBL" id="CP000967">
    <property type="protein sequence ID" value="ACD60077.1"/>
    <property type="molecule type" value="Genomic_DNA"/>
</dbReference>
<dbReference type="RefSeq" id="WP_012445526.1">
    <property type="nucleotide sequence ID" value="NC_010717.2"/>
</dbReference>
<dbReference type="SMR" id="B2SVK3"/>
<dbReference type="KEGG" id="xop:PXO_01303"/>
<dbReference type="eggNOG" id="COG0532">
    <property type="taxonomic scope" value="Bacteria"/>
</dbReference>
<dbReference type="HOGENOM" id="CLU_006301_6_1_6"/>
<dbReference type="Proteomes" id="UP000001740">
    <property type="component" value="Chromosome"/>
</dbReference>
<dbReference type="GO" id="GO:0005829">
    <property type="term" value="C:cytosol"/>
    <property type="evidence" value="ECO:0007669"/>
    <property type="project" value="TreeGrafter"/>
</dbReference>
<dbReference type="GO" id="GO:0005525">
    <property type="term" value="F:GTP binding"/>
    <property type="evidence" value="ECO:0007669"/>
    <property type="project" value="UniProtKB-KW"/>
</dbReference>
<dbReference type="GO" id="GO:0003924">
    <property type="term" value="F:GTPase activity"/>
    <property type="evidence" value="ECO:0007669"/>
    <property type="project" value="UniProtKB-UniRule"/>
</dbReference>
<dbReference type="GO" id="GO:0097216">
    <property type="term" value="F:guanosine tetraphosphate binding"/>
    <property type="evidence" value="ECO:0007669"/>
    <property type="project" value="UniProtKB-ARBA"/>
</dbReference>
<dbReference type="GO" id="GO:0003743">
    <property type="term" value="F:translation initiation factor activity"/>
    <property type="evidence" value="ECO:0007669"/>
    <property type="project" value="UniProtKB-UniRule"/>
</dbReference>
<dbReference type="CDD" id="cd01887">
    <property type="entry name" value="IF2_eIF5B"/>
    <property type="match status" value="1"/>
</dbReference>
<dbReference type="CDD" id="cd03702">
    <property type="entry name" value="IF2_mtIF2_II"/>
    <property type="match status" value="1"/>
</dbReference>
<dbReference type="CDD" id="cd03692">
    <property type="entry name" value="mtIF2_IVc"/>
    <property type="match status" value="1"/>
</dbReference>
<dbReference type="FunFam" id="2.40.30.10:FF:000008">
    <property type="entry name" value="Translation initiation factor IF-2"/>
    <property type="match status" value="1"/>
</dbReference>
<dbReference type="FunFam" id="2.40.30.10:FF:000054">
    <property type="entry name" value="Translation initiation factor IF-2"/>
    <property type="match status" value="1"/>
</dbReference>
<dbReference type="FunFam" id="3.40.50.10050:FF:000001">
    <property type="entry name" value="Translation initiation factor IF-2"/>
    <property type="match status" value="1"/>
</dbReference>
<dbReference type="FunFam" id="3.40.50.300:FF:000019">
    <property type="entry name" value="Translation initiation factor IF-2"/>
    <property type="match status" value="1"/>
</dbReference>
<dbReference type="Gene3D" id="3.40.50.300">
    <property type="entry name" value="P-loop containing nucleotide triphosphate hydrolases"/>
    <property type="match status" value="1"/>
</dbReference>
<dbReference type="Gene3D" id="3.30.56.50">
    <property type="entry name" value="Putative DNA-binding domain, N-terminal subdomain of bacterial translation initiation factor IF2"/>
    <property type="match status" value="1"/>
</dbReference>
<dbReference type="Gene3D" id="2.40.30.10">
    <property type="entry name" value="Translation factors"/>
    <property type="match status" value="2"/>
</dbReference>
<dbReference type="Gene3D" id="3.40.50.10050">
    <property type="entry name" value="Translation initiation factor IF- 2, domain 3"/>
    <property type="match status" value="1"/>
</dbReference>
<dbReference type="HAMAP" id="MF_00100_B">
    <property type="entry name" value="IF_2_B"/>
    <property type="match status" value="1"/>
</dbReference>
<dbReference type="InterPro" id="IPR009061">
    <property type="entry name" value="DNA-bd_dom_put_sf"/>
</dbReference>
<dbReference type="InterPro" id="IPR053905">
    <property type="entry name" value="EF-G-like_DII"/>
</dbReference>
<dbReference type="InterPro" id="IPR004161">
    <property type="entry name" value="EFTu-like_2"/>
</dbReference>
<dbReference type="InterPro" id="IPR013575">
    <property type="entry name" value="IF2_assoc_dom_bac"/>
</dbReference>
<dbReference type="InterPro" id="IPR044145">
    <property type="entry name" value="IF2_II"/>
</dbReference>
<dbReference type="InterPro" id="IPR006847">
    <property type="entry name" value="IF2_N"/>
</dbReference>
<dbReference type="InterPro" id="IPR027417">
    <property type="entry name" value="P-loop_NTPase"/>
</dbReference>
<dbReference type="InterPro" id="IPR005225">
    <property type="entry name" value="Small_GTP-bd"/>
</dbReference>
<dbReference type="InterPro" id="IPR000795">
    <property type="entry name" value="T_Tr_GTP-bd_dom"/>
</dbReference>
<dbReference type="InterPro" id="IPR000178">
    <property type="entry name" value="TF_IF2_bacterial-like"/>
</dbReference>
<dbReference type="InterPro" id="IPR015760">
    <property type="entry name" value="TIF_IF2"/>
</dbReference>
<dbReference type="InterPro" id="IPR023115">
    <property type="entry name" value="TIF_IF2_dom3"/>
</dbReference>
<dbReference type="InterPro" id="IPR036925">
    <property type="entry name" value="TIF_IF2_dom3_sf"/>
</dbReference>
<dbReference type="InterPro" id="IPR009000">
    <property type="entry name" value="Transl_B-barrel_sf"/>
</dbReference>
<dbReference type="NCBIfam" id="TIGR00487">
    <property type="entry name" value="IF-2"/>
    <property type="match status" value="1"/>
</dbReference>
<dbReference type="NCBIfam" id="TIGR00231">
    <property type="entry name" value="small_GTP"/>
    <property type="match status" value="1"/>
</dbReference>
<dbReference type="PANTHER" id="PTHR43381:SF5">
    <property type="entry name" value="TR-TYPE G DOMAIN-CONTAINING PROTEIN"/>
    <property type="match status" value="1"/>
</dbReference>
<dbReference type="PANTHER" id="PTHR43381">
    <property type="entry name" value="TRANSLATION INITIATION FACTOR IF-2-RELATED"/>
    <property type="match status" value="1"/>
</dbReference>
<dbReference type="Pfam" id="PF22042">
    <property type="entry name" value="EF-G_D2"/>
    <property type="match status" value="1"/>
</dbReference>
<dbReference type="Pfam" id="PF00009">
    <property type="entry name" value="GTP_EFTU"/>
    <property type="match status" value="1"/>
</dbReference>
<dbReference type="Pfam" id="PF03144">
    <property type="entry name" value="GTP_EFTU_D2"/>
    <property type="match status" value="1"/>
</dbReference>
<dbReference type="Pfam" id="PF11987">
    <property type="entry name" value="IF-2"/>
    <property type="match status" value="1"/>
</dbReference>
<dbReference type="Pfam" id="PF08364">
    <property type="entry name" value="IF2_assoc"/>
    <property type="match status" value="1"/>
</dbReference>
<dbReference type="Pfam" id="PF04760">
    <property type="entry name" value="IF2_N"/>
    <property type="match status" value="1"/>
</dbReference>
<dbReference type="SUPFAM" id="SSF52156">
    <property type="entry name" value="Initiation factor IF2/eIF5b, domain 3"/>
    <property type="match status" value="1"/>
</dbReference>
<dbReference type="SUPFAM" id="SSF52540">
    <property type="entry name" value="P-loop containing nucleoside triphosphate hydrolases"/>
    <property type="match status" value="1"/>
</dbReference>
<dbReference type="SUPFAM" id="SSF46955">
    <property type="entry name" value="Putative DNA-binding domain"/>
    <property type="match status" value="1"/>
</dbReference>
<dbReference type="SUPFAM" id="SSF50447">
    <property type="entry name" value="Translation proteins"/>
    <property type="match status" value="2"/>
</dbReference>
<dbReference type="PROSITE" id="PS51722">
    <property type="entry name" value="G_TR_2"/>
    <property type="match status" value="1"/>
</dbReference>
<dbReference type="PROSITE" id="PS01176">
    <property type="entry name" value="IF2"/>
    <property type="match status" value="1"/>
</dbReference>
<evidence type="ECO:0000250" key="1"/>
<evidence type="ECO:0000255" key="2">
    <source>
        <dbReference type="HAMAP-Rule" id="MF_00100"/>
    </source>
</evidence>
<evidence type="ECO:0000256" key="3">
    <source>
        <dbReference type="SAM" id="MobiDB-lite"/>
    </source>
</evidence>
<reference key="1">
    <citation type="journal article" date="2008" name="BMC Genomics">
        <title>Genome sequence and rapid evolution of the rice pathogen Xanthomonas oryzae pv. oryzae PXO99A.</title>
        <authorList>
            <person name="Salzberg S.L."/>
            <person name="Sommer D.D."/>
            <person name="Schatz M.C."/>
            <person name="Phillippy A.M."/>
            <person name="Rabinowicz P.D."/>
            <person name="Tsuge S."/>
            <person name="Furutani A."/>
            <person name="Ochiai H."/>
            <person name="Delcher A.L."/>
            <person name="Kelley D."/>
            <person name="Madupu R."/>
            <person name="Puiu D."/>
            <person name="Radune D."/>
            <person name="Shumway M."/>
            <person name="Trapnell C."/>
            <person name="Aparna G."/>
            <person name="Jha G."/>
            <person name="Pandey A."/>
            <person name="Patil P.B."/>
            <person name="Ishihara H."/>
            <person name="Meyer D.F."/>
            <person name="Szurek B."/>
            <person name="Verdier V."/>
            <person name="Koebnik R."/>
            <person name="Dow J.M."/>
            <person name="Ryan R.P."/>
            <person name="Hirata H."/>
            <person name="Tsuyumu S."/>
            <person name="Won Lee S."/>
            <person name="Seo Y.-S."/>
            <person name="Sriariyanum M."/>
            <person name="Ronald P.C."/>
            <person name="Sonti R.V."/>
            <person name="Van Sluys M.-A."/>
            <person name="Leach J.E."/>
            <person name="White F.F."/>
            <person name="Bogdanove A.J."/>
        </authorList>
    </citation>
    <scope>NUCLEOTIDE SEQUENCE [LARGE SCALE GENOMIC DNA]</scope>
    <source>
        <strain>PXO99A</strain>
    </source>
</reference>
<feature type="chain" id="PRO_1000093844" description="Translation initiation factor IF-2">
    <location>
        <begin position="1"/>
        <end position="904"/>
    </location>
</feature>
<feature type="domain" description="tr-type G">
    <location>
        <begin position="403"/>
        <end position="572"/>
    </location>
</feature>
<feature type="region of interest" description="Disordered" evidence="3">
    <location>
        <begin position="134"/>
        <end position="248"/>
    </location>
</feature>
<feature type="region of interest" description="Disordered" evidence="3">
    <location>
        <begin position="267"/>
        <end position="315"/>
    </location>
</feature>
<feature type="region of interest" description="G1" evidence="1">
    <location>
        <begin position="412"/>
        <end position="419"/>
    </location>
</feature>
<feature type="region of interest" description="G2" evidence="1">
    <location>
        <begin position="437"/>
        <end position="441"/>
    </location>
</feature>
<feature type="region of interest" description="G3" evidence="1">
    <location>
        <begin position="458"/>
        <end position="461"/>
    </location>
</feature>
<feature type="region of interest" description="G4" evidence="1">
    <location>
        <begin position="512"/>
        <end position="515"/>
    </location>
</feature>
<feature type="region of interest" description="G5" evidence="1">
    <location>
        <begin position="548"/>
        <end position="550"/>
    </location>
</feature>
<feature type="compositionally biased region" description="Basic and acidic residues" evidence="3">
    <location>
        <begin position="136"/>
        <end position="177"/>
    </location>
</feature>
<feature type="compositionally biased region" description="Low complexity" evidence="3">
    <location>
        <begin position="178"/>
        <end position="230"/>
    </location>
</feature>
<feature type="compositionally biased region" description="Low complexity" evidence="3">
    <location>
        <begin position="285"/>
        <end position="303"/>
    </location>
</feature>
<feature type="binding site" evidence="2">
    <location>
        <begin position="412"/>
        <end position="419"/>
    </location>
    <ligand>
        <name>GTP</name>
        <dbReference type="ChEBI" id="CHEBI:37565"/>
    </ligand>
</feature>
<feature type="binding site" evidence="2">
    <location>
        <begin position="458"/>
        <end position="462"/>
    </location>
    <ligand>
        <name>GTP</name>
        <dbReference type="ChEBI" id="CHEBI:37565"/>
    </ligand>
</feature>
<feature type="binding site" evidence="2">
    <location>
        <begin position="512"/>
        <end position="515"/>
    </location>
    <ligand>
        <name>GTP</name>
        <dbReference type="ChEBI" id="CHEBI:37565"/>
    </ligand>
</feature>
<protein>
    <recommendedName>
        <fullName evidence="2">Translation initiation factor IF-2</fullName>
    </recommendedName>
</protein>
<name>IF2_XANOP</name>